<dbReference type="EMBL" id="BC101926">
    <property type="protein sequence ID" value="AAI01927.1"/>
    <property type="status" value="ALT_INIT"/>
    <property type="molecule type" value="mRNA"/>
</dbReference>
<dbReference type="RefSeq" id="NP_001029072.2">
    <property type="nucleotide sequence ID" value="NM_001033900.2"/>
</dbReference>
<dbReference type="SMR" id="Q3T1H2"/>
<dbReference type="FunCoup" id="Q3T1H2">
    <property type="interactions" value="1220"/>
</dbReference>
<dbReference type="STRING" id="10116.ENSRNOP00000018107"/>
<dbReference type="GlyCosmos" id="Q3T1H2">
    <property type="glycosylation" value="1 site, No reported glycans"/>
</dbReference>
<dbReference type="GlyGen" id="Q3T1H2">
    <property type="glycosylation" value="1 site"/>
</dbReference>
<dbReference type="PhosphoSitePlus" id="Q3T1H2"/>
<dbReference type="PaxDb" id="10116-ENSRNOP00000018107"/>
<dbReference type="Ensembl" id="ENSRNOT00000018107.6">
    <property type="protein sequence ID" value="ENSRNOP00000018107.3"/>
    <property type="gene ID" value="ENSRNOG00000013553.6"/>
</dbReference>
<dbReference type="GeneID" id="499191"/>
<dbReference type="KEGG" id="rno:499191"/>
<dbReference type="UCSC" id="RGD:1583734">
    <property type="organism name" value="rat"/>
</dbReference>
<dbReference type="AGR" id="RGD:1583734"/>
<dbReference type="CTD" id="51335"/>
<dbReference type="RGD" id="1583734">
    <property type="gene designation" value="Ngrn"/>
</dbReference>
<dbReference type="eggNOG" id="ENOG502S5A6">
    <property type="taxonomic scope" value="Eukaryota"/>
</dbReference>
<dbReference type="GeneTree" id="ENSGT00390000014472"/>
<dbReference type="HOGENOM" id="CLU_076903_1_0_1"/>
<dbReference type="InParanoid" id="Q3T1H2"/>
<dbReference type="OMA" id="IEHIYFL"/>
<dbReference type="OrthoDB" id="6415470at2759"/>
<dbReference type="PhylomeDB" id="Q3T1H2"/>
<dbReference type="TreeFam" id="TF324463"/>
<dbReference type="PRO" id="PR:Q3T1H2"/>
<dbReference type="Proteomes" id="UP000002494">
    <property type="component" value="Chromosome 1"/>
</dbReference>
<dbReference type="Bgee" id="ENSRNOG00000013553">
    <property type="expression patterns" value="Expressed in cerebellum and 20 other cell types or tissues"/>
</dbReference>
<dbReference type="GO" id="GO:0005576">
    <property type="term" value="C:extracellular region"/>
    <property type="evidence" value="ECO:0007669"/>
    <property type="project" value="UniProtKB-SubCell"/>
</dbReference>
<dbReference type="GO" id="GO:0005759">
    <property type="term" value="C:mitochondrial matrix"/>
    <property type="evidence" value="ECO:0000266"/>
    <property type="project" value="RGD"/>
</dbReference>
<dbReference type="GO" id="GO:0031966">
    <property type="term" value="C:mitochondrial membrane"/>
    <property type="evidence" value="ECO:0000250"/>
    <property type="project" value="UniProtKB"/>
</dbReference>
<dbReference type="GO" id="GO:0005634">
    <property type="term" value="C:nucleus"/>
    <property type="evidence" value="ECO:0000266"/>
    <property type="project" value="RGD"/>
</dbReference>
<dbReference type="GO" id="GO:0019843">
    <property type="term" value="F:rRNA binding"/>
    <property type="evidence" value="ECO:0000250"/>
    <property type="project" value="UniProtKB"/>
</dbReference>
<dbReference type="GO" id="GO:0030154">
    <property type="term" value="P:cell differentiation"/>
    <property type="evidence" value="ECO:0007669"/>
    <property type="project" value="UniProtKB-KW"/>
</dbReference>
<dbReference type="GO" id="GO:0061668">
    <property type="term" value="P:mitochondrial ribosome assembly"/>
    <property type="evidence" value="ECO:0000250"/>
    <property type="project" value="UniProtKB"/>
</dbReference>
<dbReference type="GO" id="GO:0070131">
    <property type="term" value="P:positive regulation of mitochondrial translation"/>
    <property type="evidence" value="ECO:0000250"/>
    <property type="project" value="UniProtKB"/>
</dbReference>
<dbReference type="InterPro" id="IPR010487">
    <property type="entry name" value="NGRN/Rrg9"/>
</dbReference>
<dbReference type="PANTHER" id="PTHR13475">
    <property type="entry name" value="NEUGRIN"/>
    <property type="match status" value="1"/>
</dbReference>
<dbReference type="PANTHER" id="PTHR13475:SF4">
    <property type="entry name" value="NEUGRIN"/>
    <property type="match status" value="1"/>
</dbReference>
<dbReference type="Pfam" id="PF06413">
    <property type="entry name" value="Neugrin"/>
    <property type="match status" value="1"/>
</dbReference>
<accession>Q3T1H2</accession>
<protein>
    <recommendedName>
        <fullName>Neugrin</fullName>
    </recommendedName>
    <alternativeName>
        <fullName>Neurite outgrowth-associated protein</fullName>
    </alternativeName>
</protein>
<comment type="function">
    <text evidence="1">Plays an essential role in mitochondrial ribosome biogenesis. As a component of a functional protein-RNA module, consisting of RCC1L, NGRN, RPUSD3, RPUSD4, TRUB2, FASTKD2 and 16S mitochondrial ribosomal RNA (16S mt-rRNA), controls 16S mt-rRNA abundance and is required for intra-mitochondrial translation of core subunits of the oxidative phosphorylation system.</text>
</comment>
<comment type="subunit">
    <text evidence="1">Forms a regulatory protein-RNA complex, consisting of RCC1L, NGRN, RPUSD3, RPUSD4, TRUB2, FASTKD2 and 16S mt-rRNA. Interacts with 16S mt-rRNA; this interaction is direct.</text>
</comment>
<comment type="subcellular location">
    <subcellularLocation>
        <location evidence="1">Nucleus</location>
    </subcellularLocation>
    <subcellularLocation>
        <location evidence="1">Secreted</location>
    </subcellularLocation>
    <subcellularLocation>
        <location evidence="1">Mitochondrion membrane</location>
    </subcellularLocation>
</comment>
<comment type="similarity">
    <text evidence="4">Belongs to the neugrin family.</text>
</comment>
<comment type="sequence caution" evidence="4">
    <conflict type="erroneous initiation">
        <sequence resource="EMBL-CDS" id="AAI01927"/>
    </conflict>
    <text>Truncated N-terminus.</text>
</comment>
<keyword id="KW-0217">Developmental protein</keyword>
<keyword id="KW-0221">Differentiation</keyword>
<keyword id="KW-0325">Glycoprotein</keyword>
<keyword id="KW-0472">Membrane</keyword>
<keyword id="KW-0496">Mitochondrion</keyword>
<keyword id="KW-0539">Nucleus</keyword>
<keyword id="KW-0597">Phosphoprotein</keyword>
<keyword id="KW-1185">Reference proteome</keyword>
<keyword id="KW-0964">Secreted</keyword>
<keyword id="KW-0732">Signal</keyword>
<reference key="1">
    <citation type="journal article" date="2004" name="Genome Res.">
        <title>The status, quality, and expansion of the NIH full-length cDNA project: the Mammalian Gene Collection (MGC).</title>
        <authorList>
            <consortium name="The MGC Project Team"/>
        </authorList>
    </citation>
    <scope>NUCLEOTIDE SEQUENCE [LARGE SCALE MRNA]</scope>
    <source>
        <tissue>Prostate</tissue>
    </source>
</reference>
<evidence type="ECO:0000250" key="1">
    <source>
        <dbReference type="UniProtKB" id="Q9NPE2"/>
    </source>
</evidence>
<evidence type="ECO:0000255" key="2"/>
<evidence type="ECO:0000256" key="3">
    <source>
        <dbReference type="SAM" id="MobiDB-lite"/>
    </source>
</evidence>
<evidence type="ECO:0000305" key="4"/>
<name>NGRN_RAT</name>
<proteinExistence type="evidence at transcript level"/>
<feature type="signal peptide" evidence="2">
    <location>
        <begin position="1"/>
        <end position="15"/>
    </location>
</feature>
<feature type="chain" id="PRO_0000294486" description="Neugrin">
    <location>
        <begin position="16"/>
        <end position="293"/>
    </location>
</feature>
<feature type="region of interest" description="Disordered" evidence="3">
    <location>
        <begin position="25"/>
        <end position="48"/>
    </location>
</feature>
<feature type="region of interest" description="Disordered" evidence="3">
    <location>
        <begin position="162"/>
        <end position="211"/>
    </location>
</feature>
<feature type="modified residue" description="Phosphoserine" evidence="1">
    <location>
        <position position="41"/>
    </location>
</feature>
<feature type="glycosylation site" description="N-linked (GlcNAc...) asparagine" evidence="2">
    <location>
        <position position="270"/>
    </location>
</feature>
<organism>
    <name type="scientific">Rattus norvegicus</name>
    <name type="common">Rat</name>
    <dbReference type="NCBI Taxonomy" id="10116"/>
    <lineage>
        <taxon>Eukaryota</taxon>
        <taxon>Metazoa</taxon>
        <taxon>Chordata</taxon>
        <taxon>Craniata</taxon>
        <taxon>Vertebrata</taxon>
        <taxon>Euteleostomi</taxon>
        <taxon>Mammalia</taxon>
        <taxon>Eutheria</taxon>
        <taxon>Euarchontoglires</taxon>
        <taxon>Glires</taxon>
        <taxon>Rodentia</taxon>
        <taxon>Myomorpha</taxon>
        <taxon>Muroidea</taxon>
        <taxon>Muridae</taxon>
        <taxon>Murinae</taxon>
        <taxon>Rattus</taxon>
    </lineage>
</organism>
<sequence length="293" mass="32951">MALSLSLFLGGRVRAAVARCGFASQGVAGPGSISREPDPDSDWEPEERELQEVESALKRQKKAMRFQKIRRQMEAPGAPPRTLTWEAMEQIRYLHKEFAESWSVPRLAEGFDVSTDVIRRVLKSKFIPTLEQKLKQDQKVLKKAGITRVVWQLPVSEDTLKPLSAGHPMSGPLLMPGDEVSSNSQTHSRALKVKSNAPSAEAQKKREEKNKRIRVLAESLVPTTTALGHQRELQKYTTHDSEADRRANNHILPSVEKLEELEAGEPGDQNFSSKVVQKGREFFDSNGNFLYRI</sequence>
<gene>
    <name type="primary">Ngrn</name>
</gene>